<feature type="chain" id="PRO_1000072357" description="Large ribosomal subunit protein uL16">
    <location>
        <begin position="1"/>
        <end position="175"/>
    </location>
</feature>
<reference key="1">
    <citation type="journal article" date="2008" name="Appl. Environ. Microbiol.">
        <title>The genome sequence of the metal-mobilizing, extremely thermoacidophilic archaeon Metallosphaera sedula provides insights into bioleaching-associated metabolism.</title>
        <authorList>
            <person name="Auernik K.S."/>
            <person name="Maezato Y."/>
            <person name="Blum P.H."/>
            <person name="Kelly R.M."/>
        </authorList>
    </citation>
    <scope>NUCLEOTIDE SEQUENCE [LARGE SCALE GENOMIC DNA]</scope>
    <source>
        <strain>ATCC 51363 / DSM 5348 / JCM 9185 / NBRC 15509 / TH2</strain>
    </source>
</reference>
<dbReference type="EMBL" id="CP000682">
    <property type="protein sequence ID" value="ABP96005.1"/>
    <property type="molecule type" value="Genomic_DNA"/>
</dbReference>
<dbReference type="RefSeq" id="WP_012021792.1">
    <property type="nucleotide sequence ID" value="NZ_CP139956.1"/>
</dbReference>
<dbReference type="SMR" id="A4YHV3"/>
<dbReference type="STRING" id="399549.Msed_1865"/>
<dbReference type="KEGG" id="mse:Msed_1865"/>
<dbReference type="eggNOG" id="arCOG04113">
    <property type="taxonomic scope" value="Archaea"/>
</dbReference>
<dbReference type="HOGENOM" id="CLU_084051_0_2_2"/>
<dbReference type="Proteomes" id="UP000000242">
    <property type="component" value="Chromosome"/>
</dbReference>
<dbReference type="GO" id="GO:1990904">
    <property type="term" value="C:ribonucleoprotein complex"/>
    <property type="evidence" value="ECO:0007669"/>
    <property type="project" value="UniProtKB-KW"/>
</dbReference>
<dbReference type="GO" id="GO:0005840">
    <property type="term" value="C:ribosome"/>
    <property type="evidence" value="ECO:0007669"/>
    <property type="project" value="UniProtKB-KW"/>
</dbReference>
<dbReference type="GO" id="GO:0003735">
    <property type="term" value="F:structural constituent of ribosome"/>
    <property type="evidence" value="ECO:0007669"/>
    <property type="project" value="InterPro"/>
</dbReference>
<dbReference type="GO" id="GO:0006412">
    <property type="term" value="P:translation"/>
    <property type="evidence" value="ECO:0007669"/>
    <property type="project" value="UniProtKB-UniRule"/>
</dbReference>
<dbReference type="CDD" id="cd01433">
    <property type="entry name" value="Ribosomal_L16_L10e"/>
    <property type="match status" value="1"/>
</dbReference>
<dbReference type="Gene3D" id="3.90.1170.10">
    <property type="entry name" value="Ribosomal protein L10e/L16"/>
    <property type="match status" value="1"/>
</dbReference>
<dbReference type="HAMAP" id="MF_00448">
    <property type="entry name" value="Ribosomal_uL16_arch"/>
    <property type="match status" value="1"/>
</dbReference>
<dbReference type="InterPro" id="IPR047873">
    <property type="entry name" value="Ribosomal_uL16"/>
</dbReference>
<dbReference type="InterPro" id="IPR022981">
    <property type="entry name" value="Ribosomal_uL16_arc"/>
</dbReference>
<dbReference type="InterPro" id="IPR018255">
    <property type="entry name" value="Ribosomal_uL16_CS_euk_arc"/>
</dbReference>
<dbReference type="InterPro" id="IPR016180">
    <property type="entry name" value="Ribosomal_uL16_dom"/>
</dbReference>
<dbReference type="InterPro" id="IPR001197">
    <property type="entry name" value="Ribosomal_uL16_euk_arch"/>
</dbReference>
<dbReference type="InterPro" id="IPR036920">
    <property type="entry name" value="Ribosomal_uL16_sf"/>
</dbReference>
<dbReference type="NCBIfam" id="NF003236">
    <property type="entry name" value="PRK04199.1-1"/>
    <property type="match status" value="1"/>
</dbReference>
<dbReference type="NCBIfam" id="NF003239">
    <property type="entry name" value="PRK04199.1-4"/>
    <property type="match status" value="1"/>
</dbReference>
<dbReference type="PANTHER" id="PTHR11726">
    <property type="entry name" value="60S RIBOSOMAL PROTEIN L10"/>
    <property type="match status" value="1"/>
</dbReference>
<dbReference type="Pfam" id="PF00252">
    <property type="entry name" value="Ribosomal_L16"/>
    <property type="match status" value="1"/>
</dbReference>
<dbReference type="PIRSF" id="PIRSF005590">
    <property type="entry name" value="Ribosomal_L10"/>
    <property type="match status" value="1"/>
</dbReference>
<dbReference type="SUPFAM" id="SSF54686">
    <property type="entry name" value="Ribosomal protein L16p/L10e"/>
    <property type="match status" value="1"/>
</dbReference>
<dbReference type="PROSITE" id="PS01257">
    <property type="entry name" value="RIBOSOMAL_L10E"/>
    <property type="match status" value="1"/>
</dbReference>
<name>RL10E_METS5</name>
<accession>A4YHV3</accession>
<organism>
    <name type="scientific">Metallosphaera sedula (strain ATCC 51363 / DSM 5348 / JCM 9185 / NBRC 15509 / TH2)</name>
    <dbReference type="NCBI Taxonomy" id="399549"/>
    <lineage>
        <taxon>Archaea</taxon>
        <taxon>Thermoproteota</taxon>
        <taxon>Thermoprotei</taxon>
        <taxon>Sulfolobales</taxon>
        <taxon>Sulfolobaceae</taxon>
        <taxon>Metallosphaera</taxon>
    </lineage>
</organism>
<evidence type="ECO:0000255" key="1">
    <source>
        <dbReference type="HAMAP-Rule" id="MF_00448"/>
    </source>
</evidence>
<evidence type="ECO:0000305" key="2"/>
<gene>
    <name evidence="1" type="primary">rpl10e</name>
    <name type="ordered locus">Msed_1865</name>
</gene>
<comment type="similarity">
    <text evidence="1">Belongs to the universal ribosomal protein uL16 family.</text>
</comment>
<keyword id="KW-1185">Reference proteome</keyword>
<keyword id="KW-0687">Ribonucleoprotein</keyword>
<keyword id="KW-0689">Ribosomal protein</keyword>
<sequence length="175" mass="20007">MPLRPGRCYRHFSGPAYTRKEYIPGVPQPKITKFTMGDHKKDYDFEVRLLTKQIGQIRHNALEAARVIALKQMTSMVGNETDFYLYVTKYPHHVIRENKMMAFAGADRLQDGMRLSFGKPIGTAARITKLGDLIMAIRVKKEHLEFAKKAFKVASSKLPLDTEIVVVPLKEEKTQ</sequence>
<protein>
    <recommendedName>
        <fullName evidence="1">Large ribosomal subunit protein uL16</fullName>
    </recommendedName>
    <alternativeName>
        <fullName evidence="2">50S ribosomal protein L10e</fullName>
    </alternativeName>
</protein>
<proteinExistence type="inferred from homology"/>